<protein>
    <recommendedName>
        <fullName>Tyrosine--tRNA ligase, mitochondrial</fullName>
        <ecNumber evidence="5 6">6.1.1.1</ecNumber>
    </recommendedName>
    <alternativeName>
        <fullName>Tyrosyl-tRNA synthetase</fullName>
        <shortName evidence="10">TyrRS</shortName>
    </alternativeName>
</protein>
<evidence type="ECO:0000250" key="1"/>
<evidence type="ECO:0000250" key="2">
    <source>
        <dbReference type="UniProtKB" id="Q8BYL4"/>
    </source>
</evidence>
<evidence type="ECO:0000255" key="3"/>
<evidence type="ECO:0000269" key="4">
    <source>
    </source>
</evidence>
<evidence type="ECO:0000269" key="5">
    <source>
    </source>
</evidence>
<evidence type="ECO:0000269" key="6">
    <source>
    </source>
</evidence>
<evidence type="ECO:0000269" key="7">
    <source>
    </source>
</evidence>
<evidence type="ECO:0000269" key="8">
    <source>
    </source>
</evidence>
<evidence type="ECO:0000269" key="9">
    <source>
    </source>
</evidence>
<evidence type="ECO:0000303" key="10">
    <source>
    </source>
</evidence>
<evidence type="ECO:0000305" key="11"/>
<evidence type="ECO:0007744" key="12">
    <source>
        <dbReference type="PDB" id="2PID"/>
    </source>
</evidence>
<evidence type="ECO:0007744" key="13">
    <source>
        <dbReference type="PDB" id="3ZXI"/>
    </source>
</evidence>
<evidence type="ECO:0007744" key="14">
    <source>
    </source>
</evidence>
<evidence type="ECO:0007829" key="15">
    <source>
        <dbReference type="PDB" id="2PID"/>
    </source>
</evidence>
<evidence type="ECO:0007829" key="16">
    <source>
        <dbReference type="PDB" id="3ZXI"/>
    </source>
</evidence>
<comment type="function">
    <text evidence="5 6">Catalyzes the attachment of tyrosine to tRNA(Tyr) in a two-step reaction: tyrosine is first activated by ATP to form Tyr-AMP and then transferred to the acceptor end of tRNA(Tyr).</text>
</comment>
<comment type="catalytic activity">
    <reaction evidence="5 6">
        <text>tRNA(Tyr) + L-tyrosine + ATP = L-tyrosyl-tRNA(Tyr) + AMP + diphosphate + H(+)</text>
        <dbReference type="Rhea" id="RHEA:10220"/>
        <dbReference type="Rhea" id="RHEA-COMP:9706"/>
        <dbReference type="Rhea" id="RHEA-COMP:9707"/>
        <dbReference type="ChEBI" id="CHEBI:15378"/>
        <dbReference type="ChEBI" id="CHEBI:30616"/>
        <dbReference type="ChEBI" id="CHEBI:33019"/>
        <dbReference type="ChEBI" id="CHEBI:58315"/>
        <dbReference type="ChEBI" id="CHEBI:78442"/>
        <dbReference type="ChEBI" id="CHEBI:78536"/>
        <dbReference type="ChEBI" id="CHEBI:456215"/>
        <dbReference type="EC" id="6.1.1.1"/>
    </reaction>
</comment>
<comment type="subunit">
    <text evidence="5 6">Homodimer.</text>
</comment>
<comment type="interaction">
    <interactant intactId="EBI-1049286">
        <id>Q9Y2Z4</id>
    </interactant>
    <interactant intactId="EBI-11522760">
        <id>Q6RW13-2</id>
        <label>AGTRAP</label>
    </interactant>
    <organismsDiffer>false</organismsDiffer>
    <experiments>3</experiments>
</comment>
<comment type="interaction">
    <interactant intactId="EBI-1049286">
        <id>Q9Y2Z4</id>
    </interactant>
    <interactant intactId="EBI-10175124">
        <id>Q8IZU0</id>
        <label>FAM9B</label>
    </interactant>
    <organismsDiffer>false</organismsDiffer>
    <experiments>3</experiments>
</comment>
<comment type="subcellular location">
    <subcellularLocation>
        <location evidence="5 9">Mitochondrion matrix</location>
    </subcellularLocation>
</comment>
<comment type="disease" evidence="7 8">
    <disease id="DI-02902">
        <name>Myopathy with lactic acidosis and sideroblastic anemia 2</name>
        <acronym>MLASA2</acronym>
        <description>A rare oxidative phosphorylation disorder specific to skeletal muscle and bone marrow. Affected individuals manifest sideroblastic anemia, progressive lethargy, muscle weakness, and exercise intolerance associated with persistent lactic acidemia.</description>
        <dbReference type="MIM" id="613561"/>
    </disease>
    <text>The disease is caused by variants affecting the gene represented in this entry.</text>
</comment>
<comment type="similarity">
    <text evidence="11">Belongs to the class-I aminoacyl-tRNA synthetase family.</text>
</comment>
<feature type="transit peptide" description="Mitochondrion" evidence="3">
    <location>
        <begin position="1"/>
        <end position="16"/>
    </location>
</feature>
<feature type="chain" id="PRO_0000035830" description="Tyrosine--tRNA ligase, mitochondrial">
    <location>
        <begin position="17"/>
        <end position="477"/>
    </location>
</feature>
<feature type="short sequence motif" description="'HIGH' region" evidence="11">
    <location>
        <begin position="82"/>
        <end position="91"/>
    </location>
</feature>
<feature type="short sequence motif" description="'KMSKS' region" evidence="11">
    <location>
        <begin position="281"/>
        <end position="285"/>
    </location>
</feature>
<feature type="binding site" evidence="6 12 13">
    <location>
        <position position="77"/>
    </location>
    <ligand>
        <name>L-tyrosine</name>
        <dbReference type="ChEBI" id="CHEBI:58315"/>
    </ligand>
</feature>
<feature type="binding site" evidence="6 12 13">
    <location>
        <position position="81"/>
    </location>
    <ligand>
        <name>ATP</name>
        <dbReference type="ChEBI" id="CHEBI:30616"/>
    </ligand>
</feature>
<feature type="binding site" evidence="6 12 13">
    <location>
        <position position="121"/>
    </location>
    <ligand>
        <name>L-tyrosine</name>
        <dbReference type="ChEBI" id="CHEBI:58315"/>
    </ligand>
</feature>
<feature type="binding site" evidence="6 12">
    <location>
        <position position="221"/>
    </location>
    <ligand>
        <name>L-tyrosine</name>
        <dbReference type="ChEBI" id="CHEBI:58315"/>
    </ligand>
</feature>
<feature type="binding site" evidence="6 12">
    <location>
        <position position="225"/>
    </location>
    <ligand>
        <name>L-tyrosine</name>
        <dbReference type="ChEBI" id="CHEBI:58315"/>
    </ligand>
</feature>
<feature type="binding site" evidence="6 12">
    <location>
        <position position="228"/>
    </location>
    <ligand>
        <name>L-tyrosine</name>
        <dbReference type="ChEBI" id="CHEBI:58315"/>
    </ligand>
</feature>
<feature type="binding site" evidence="6 12">
    <location>
        <begin position="244"/>
        <end position="246"/>
    </location>
    <ligand>
        <name>ATP</name>
        <dbReference type="ChEBI" id="CHEBI:30616"/>
    </ligand>
</feature>
<feature type="binding site" evidence="6 12">
    <location>
        <position position="247"/>
    </location>
    <ligand>
        <name>L-tyrosine</name>
        <dbReference type="ChEBI" id="CHEBI:58315"/>
    </ligand>
</feature>
<feature type="binding site" evidence="6 12 13">
    <location>
        <position position="274"/>
    </location>
    <ligand>
        <name>ATP</name>
        <dbReference type="ChEBI" id="CHEBI:30616"/>
    </ligand>
</feature>
<feature type="binding site" evidence="1">
    <location>
        <position position="284"/>
    </location>
    <ligand>
        <name>ATP</name>
        <dbReference type="ChEBI" id="CHEBI:30616"/>
    </ligand>
</feature>
<feature type="modified residue" description="N6-acetyllysine" evidence="14">
    <location>
        <position position="355"/>
    </location>
</feature>
<feature type="modified residue" description="N6-acetyllysine" evidence="2">
    <location>
        <position position="367"/>
    </location>
</feature>
<feature type="sequence variant" id="VAR_068646" description="In MLASA2; dbSNP:rs587777213." evidence="8">
    <original>G</original>
    <variation>D</variation>
    <location>
        <position position="46"/>
    </location>
</feature>
<feature type="sequence variant" id="VAR_064188" description="In MLASA2; has a 2-fold reduction in catalytic activity and a reduction in affinity for tRNA-tyr resulting in an overall 9-fold loss of catalytic efficiency; dbSNP:rs267607180." evidence="7">
    <original>F</original>
    <variation>L</variation>
    <location>
        <position position="52"/>
    </location>
</feature>
<feature type="sequence variant" id="VAR_034534" description="In dbSNP:rs11539445." evidence="4">
    <original>G</original>
    <variation>V</variation>
    <location>
        <position position="191"/>
    </location>
</feature>
<feature type="mutagenesis site" description="Loss of tRNA ligase activity." evidence="6">
    <original>S</original>
    <variation>E</variation>
    <location>
        <position position="200"/>
    </location>
</feature>
<feature type="mutagenesis site" description="Mildly decreased tRNA ligase activity." evidence="6">
    <original>Q</original>
    <variation>A</variation>
    <location>
        <position position="202"/>
    </location>
</feature>
<feature type="sequence conflict" description="In Ref. 1; AAD27714." evidence="11" ref="1">
    <original>MAAP</original>
    <variation>MGA</variation>
    <location>
        <begin position="1"/>
        <end position="4"/>
    </location>
</feature>
<feature type="sequence conflict" description="In Ref. 1; AAD27714." evidence="11" ref="1">
    <original>R</original>
    <variation>A</variation>
    <location>
        <position position="118"/>
    </location>
</feature>
<feature type="sequence conflict" description="In Ref. 1; AAD27714." evidence="11" ref="1">
    <original>P</original>
    <variation>T</variation>
    <location>
        <position position="272"/>
    </location>
</feature>
<feature type="sequence conflict" description="In Ref. 1; AAD27714." evidence="11" ref="1">
    <original>D</original>
    <variation>E</variation>
    <location>
        <position position="311"/>
    </location>
</feature>
<feature type="helix" evidence="15">
    <location>
        <begin position="38"/>
        <end position="45"/>
    </location>
</feature>
<feature type="strand" evidence="15">
    <location>
        <begin position="50"/>
        <end position="52"/>
    </location>
</feature>
<feature type="helix" evidence="15">
    <location>
        <begin position="61"/>
        <end position="64"/>
    </location>
</feature>
<feature type="strand" evidence="15">
    <location>
        <begin position="67"/>
        <end position="70"/>
    </location>
</feature>
<feature type="strand" evidence="15">
    <location>
        <begin position="75"/>
        <end position="80"/>
    </location>
</feature>
<feature type="strand" evidence="15">
    <location>
        <begin position="83"/>
        <end position="86"/>
    </location>
</feature>
<feature type="helix" evidence="15">
    <location>
        <begin position="89"/>
        <end position="103"/>
    </location>
</feature>
<feature type="strand" evidence="15">
    <location>
        <begin position="107"/>
        <end position="112"/>
    </location>
</feature>
<feature type="helix" evidence="15">
    <location>
        <begin position="116"/>
        <end position="118"/>
    </location>
</feature>
<feature type="helix" evidence="15">
    <location>
        <begin position="134"/>
        <end position="158"/>
    </location>
</feature>
<feature type="strand" evidence="15">
    <location>
        <begin position="168"/>
        <end position="172"/>
    </location>
</feature>
<feature type="helix" evidence="15">
    <location>
        <begin position="174"/>
        <end position="177"/>
    </location>
</feature>
<feature type="helix" evidence="15">
    <location>
        <begin position="182"/>
        <end position="189"/>
    </location>
</feature>
<feature type="helix" evidence="15">
    <location>
        <begin position="190"/>
        <end position="192"/>
    </location>
</feature>
<feature type="helix" evidence="15">
    <location>
        <begin position="195"/>
        <end position="200"/>
    </location>
</feature>
<feature type="helix" evidence="15">
    <location>
        <begin position="202"/>
        <end position="208"/>
    </location>
</feature>
<feature type="strand" evidence="16">
    <location>
        <begin position="210"/>
        <end position="212"/>
    </location>
</feature>
<feature type="helix" evidence="15">
    <location>
        <begin position="216"/>
        <end position="236"/>
    </location>
</feature>
<feature type="strand" evidence="15">
    <location>
        <begin position="240"/>
        <end position="244"/>
    </location>
</feature>
<feature type="helix" evidence="15">
    <location>
        <begin position="245"/>
        <end position="247"/>
    </location>
</feature>
<feature type="helix" evidence="15">
    <location>
        <begin position="248"/>
        <end position="261"/>
    </location>
</feature>
<feature type="strand" evidence="15">
    <location>
        <begin position="267"/>
        <end position="271"/>
    </location>
</feature>
<feature type="strand" evidence="15">
    <location>
        <begin position="291"/>
        <end position="293"/>
    </location>
</feature>
<feature type="turn" evidence="15">
    <location>
        <begin position="294"/>
        <end position="296"/>
    </location>
</feature>
<feature type="helix" evidence="15">
    <location>
        <begin position="299"/>
        <end position="307"/>
    </location>
</feature>
<feature type="helix" evidence="15">
    <location>
        <begin position="311"/>
        <end position="321"/>
    </location>
</feature>
<feature type="helix" evidence="15">
    <location>
        <begin position="326"/>
        <end position="338"/>
    </location>
</feature>
<feature type="helix" evidence="15">
    <location>
        <begin position="340"/>
        <end position="342"/>
    </location>
</feature>
<feature type="helix" evidence="15">
    <location>
        <begin position="344"/>
        <end position="372"/>
    </location>
</feature>
<keyword id="KW-0002">3D-structure</keyword>
<keyword id="KW-0007">Acetylation</keyword>
<keyword id="KW-0030">Aminoacyl-tRNA synthetase</keyword>
<keyword id="KW-0067">ATP-binding</keyword>
<keyword id="KW-0225">Disease variant</keyword>
<keyword id="KW-0436">Ligase</keyword>
<keyword id="KW-0496">Mitochondrion</keyword>
<keyword id="KW-0547">Nucleotide-binding</keyword>
<keyword id="KW-1274">Primary mitochondrial disease</keyword>
<keyword id="KW-0648">Protein biosynthesis</keyword>
<keyword id="KW-1267">Proteomics identification</keyword>
<keyword id="KW-1185">Reference proteome</keyword>
<keyword id="KW-0809">Transit peptide</keyword>
<organism>
    <name type="scientific">Homo sapiens</name>
    <name type="common">Human</name>
    <dbReference type="NCBI Taxonomy" id="9606"/>
    <lineage>
        <taxon>Eukaryota</taxon>
        <taxon>Metazoa</taxon>
        <taxon>Chordata</taxon>
        <taxon>Craniata</taxon>
        <taxon>Vertebrata</taxon>
        <taxon>Euteleostomi</taxon>
        <taxon>Mammalia</taxon>
        <taxon>Eutheria</taxon>
        <taxon>Euarchontoglires</taxon>
        <taxon>Primates</taxon>
        <taxon>Haplorrhini</taxon>
        <taxon>Catarrhini</taxon>
        <taxon>Hominidae</taxon>
        <taxon>Homo</taxon>
    </lineage>
</organism>
<accession>Q9Y2Z4</accession>
<accession>D3DUW8</accession>
<accession>Q9H817</accession>
<sequence length="477" mass="53199">MAAPILRSFSWGRWSGTLNLSVLLPLGLRKAHSGAQGLLAAQKARGLFKDFFPETGTKIELPELFDRGTASFPQTIYCGFDPTADSLHVGHLLALLGLFHLQRAGHNVIALVGGATARLGDPSGRTKEREALETERVRANARALRLGLEALAANHQQLFTDGRSWGSFTVLDNSAWYQKQHLVDFLAAVGGHFRMGTLLSRQSVQLRLKSPEGMSLAEFFYQVLQAYDFYYLFQRYGCRVQLGGSDQLGNIMSGYEFINKLTGEDVFGITVPLITSTTGAKLGKSAGNAVWLNRDKTSPFELYQFFVRQPDDSVERYLKLFTFLPLPEIDHIMQLHVKEPERRGPQKRLAAEVTKLVHGREGLDSAKRCTQALYHSSIDALEVMSDQELKELFKEAPFSEFFLDPGTSVLDTCRKANAIPDGPRGYRMITEGGVSINHQQVTNPESVLIVGQHILKNGLSLLKIGKRNFYIIKWLQL</sequence>
<name>SYYM_HUMAN</name>
<proteinExistence type="evidence at protein level"/>
<dbReference type="EC" id="6.1.1.1" evidence="5 6"/>
<dbReference type="EMBL" id="AF132939">
    <property type="protein sequence ID" value="AAD27714.1"/>
    <property type="molecule type" value="mRNA"/>
</dbReference>
<dbReference type="EMBL" id="AK024057">
    <property type="protein sequence ID" value="BAB14806.1"/>
    <property type="molecule type" value="mRNA"/>
</dbReference>
<dbReference type="EMBL" id="AC087588">
    <property type="status" value="NOT_ANNOTATED_CDS"/>
    <property type="molecule type" value="Genomic_DNA"/>
</dbReference>
<dbReference type="EMBL" id="CH471116">
    <property type="protein sequence ID" value="EAW88517.1"/>
    <property type="molecule type" value="Genomic_DNA"/>
</dbReference>
<dbReference type="EMBL" id="CH471116">
    <property type="protein sequence ID" value="EAW88518.1"/>
    <property type="molecule type" value="Genomic_DNA"/>
</dbReference>
<dbReference type="EMBL" id="BC015625">
    <property type="protein sequence ID" value="AAH15625.1"/>
    <property type="molecule type" value="mRNA"/>
</dbReference>
<dbReference type="CCDS" id="CCDS31770.1"/>
<dbReference type="RefSeq" id="NP_001035526.1">
    <property type="nucleotide sequence ID" value="NM_001040436.3"/>
</dbReference>
<dbReference type="PDB" id="2PID">
    <property type="method" value="X-ray"/>
    <property type="resolution" value="2.20 A"/>
    <property type="chains" value="A/B=32-375"/>
</dbReference>
<dbReference type="PDB" id="3ZXI">
    <property type="method" value="X-ray"/>
    <property type="resolution" value="2.75 A"/>
    <property type="chains" value="A/B=32-375"/>
</dbReference>
<dbReference type="PDBsum" id="2PID"/>
<dbReference type="PDBsum" id="3ZXI"/>
<dbReference type="SMR" id="Q9Y2Z4"/>
<dbReference type="BioGRID" id="119258">
    <property type="interactions" value="254"/>
</dbReference>
<dbReference type="DIP" id="DIP-29487N"/>
<dbReference type="FunCoup" id="Q9Y2Z4">
    <property type="interactions" value="2629"/>
</dbReference>
<dbReference type="IntAct" id="Q9Y2Z4">
    <property type="interactions" value="185"/>
</dbReference>
<dbReference type="MINT" id="Q9Y2Z4"/>
<dbReference type="STRING" id="9606.ENSP00000320658"/>
<dbReference type="DrugBank" id="DB00135">
    <property type="generic name" value="Tyrosine"/>
</dbReference>
<dbReference type="GlyGen" id="Q9Y2Z4">
    <property type="glycosylation" value="1 site, 1 O-linked glycan (1 site)"/>
</dbReference>
<dbReference type="iPTMnet" id="Q9Y2Z4"/>
<dbReference type="PhosphoSitePlus" id="Q9Y2Z4"/>
<dbReference type="SwissPalm" id="Q9Y2Z4"/>
<dbReference type="BioMuta" id="YARS2"/>
<dbReference type="DMDM" id="50401709"/>
<dbReference type="jPOST" id="Q9Y2Z4"/>
<dbReference type="MassIVE" id="Q9Y2Z4"/>
<dbReference type="PaxDb" id="9606-ENSP00000320658"/>
<dbReference type="PeptideAtlas" id="Q9Y2Z4"/>
<dbReference type="ProteomicsDB" id="85948"/>
<dbReference type="Pumba" id="Q9Y2Z4"/>
<dbReference type="ABCD" id="Q9Y2Z4">
    <property type="antibodies" value="2 sequenced antibodies"/>
</dbReference>
<dbReference type="Antibodypedia" id="24801">
    <property type="antibodies" value="141 antibodies from 25 providers"/>
</dbReference>
<dbReference type="DNASU" id="51067"/>
<dbReference type="Ensembl" id="ENST00000324868.13">
    <property type="protein sequence ID" value="ENSP00000320658.8"/>
    <property type="gene ID" value="ENSG00000139131.13"/>
</dbReference>
<dbReference type="GeneID" id="51067"/>
<dbReference type="KEGG" id="hsa:51067"/>
<dbReference type="MANE-Select" id="ENST00000324868.13">
    <property type="protein sequence ID" value="ENSP00000320658.8"/>
    <property type="RefSeq nucleotide sequence ID" value="NM_001040436.3"/>
    <property type="RefSeq protein sequence ID" value="NP_001035526.1"/>
</dbReference>
<dbReference type="UCSC" id="uc001rli.4">
    <property type="organism name" value="human"/>
</dbReference>
<dbReference type="AGR" id="HGNC:24249"/>
<dbReference type="CTD" id="51067"/>
<dbReference type="DisGeNET" id="51067"/>
<dbReference type="GeneCards" id="YARS2"/>
<dbReference type="HGNC" id="HGNC:24249">
    <property type="gene designation" value="YARS2"/>
</dbReference>
<dbReference type="HPA" id="ENSG00000139131">
    <property type="expression patterns" value="Low tissue specificity"/>
</dbReference>
<dbReference type="MalaCards" id="YARS2"/>
<dbReference type="MIM" id="610957">
    <property type="type" value="gene"/>
</dbReference>
<dbReference type="MIM" id="613561">
    <property type="type" value="phenotype"/>
</dbReference>
<dbReference type="neXtProt" id="NX_Q9Y2Z4"/>
<dbReference type="OpenTargets" id="ENSG00000139131"/>
<dbReference type="Orphanet" id="2598">
    <property type="disease" value="Mitochondrial myopathy and sideroblastic anemia"/>
</dbReference>
<dbReference type="PharmGKB" id="PA142670559"/>
<dbReference type="VEuPathDB" id="HostDB:ENSG00000139131"/>
<dbReference type="eggNOG" id="KOG2623">
    <property type="taxonomic scope" value="Eukaryota"/>
</dbReference>
<dbReference type="GeneTree" id="ENSGT00390000013709"/>
<dbReference type="InParanoid" id="Q9Y2Z4"/>
<dbReference type="OMA" id="YMMAKDS"/>
<dbReference type="OrthoDB" id="337870at2759"/>
<dbReference type="PAN-GO" id="Q9Y2Z4">
    <property type="GO annotations" value="4 GO annotations based on evolutionary models"/>
</dbReference>
<dbReference type="PhylomeDB" id="Q9Y2Z4"/>
<dbReference type="TreeFam" id="TF105974"/>
<dbReference type="BRENDA" id="6.1.1.1">
    <property type="organism ID" value="2681"/>
</dbReference>
<dbReference type="PathwayCommons" id="Q9Y2Z4"/>
<dbReference type="Reactome" id="R-HSA-379726">
    <property type="pathway name" value="Mitochondrial tRNA aminoacylation"/>
</dbReference>
<dbReference type="SignaLink" id="Q9Y2Z4"/>
<dbReference type="SIGNOR" id="Q9Y2Z4"/>
<dbReference type="BioGRID-ORCS" id="51067">
    <property type="hits" value="638 hits in 1167 CRISPR screens"/>
</dbReference>
<dbReference type="ChiTaRS" id="YARS2">
    <property type="organism name" value="human"/>
</dbReference>
<dbReference type="EvolutionaryTrace" id="Q9Y2Z4"/>
<dbReference type="GenomeRNAi" id="51067"/>
<dbReference type="Pharos" id="Q9Y2Z4">
    <property type="development level" value="Tbio"/>
</dbReference>
<dbReference type="PRO" id="PR:Q9Y2Z4"/>
<dbReference type="Proteomes" id="UP000005640">
    <property type="component" value="Chromosome 12"/>
</dbReference>
<dbReference type="RNAct" id="Q9Y2Z4">
    <property type="molecule type" value="protein"/>
</dbReference>
<dbReference type="Bgee" id="ENSG00000139131">
    <property type="expression patterns" value="Expressed in oocyte and 195 other cell types or tissues"/>
</dbReference>
<dbReference type="ExpressionAtlas" id="Q9Y2Z4">
    <property type="expression patterns" value="baseline and differential"/>
</dbReference>
<dbReference type="GO" id="GO:0005829">
    <property type="term" value="C:cytosol"/>
    <property type="evidence" value="ECO:0000318"/>
    <property type="project" value="GO_Central"/>
</dbReference>
<dbReference type="GO" id="GO:0005759">
    <property type="term" value="C:mitochondrial matrix"/>
    <property type="evidence" value="ECO:0000314"/>
    <property type="project" value="UniProtKB"/>
</dbReference>
<dbReference type="GO" id="GO:0005739">
    <property type="term" value="C:mitochondrion"/>
    <property type="evidence" value="ECO:0000314"/>
    <property type="project" value="HPA"/>
</dbReference>
<dbReference type="GO" id="GO:0016604">
    <property type="term" value="C:nuclear body"/>
    <property type="evidence" value="ECO:0000314"/>
    <property type="project" value="HPA"/>
</dbReference>
<dbReference type="GO" id="GO:0005524">
    <property type="term" value="F:ATP binding"/>
    <property type="evidence" value="ECO:0000304"/>
    <property type="project" value="BHF-UCL"/>
</dbReference>
<dbReference type="GO" id="GO:0072545">
    <property type="term" value="F:L-tyrosine binding"/>
    <property type="evidence" value="ECO:0000314"/>
    <property type="project" value="BHF-UCL"/>
</dbReference>
<dbReference type="GO" id="GO:0042803">
    <property type="term" value="F:protein homodimerization activity"/>
    <property type="evidence" value="ECO:0000353"/>
    <property type="project" value="BHF-UCL"/>
</dbReference>
<dbReference type="GO" id="GO:0003723">
    <property type="term" value="F:RNA binding"/>
    <property type="evidence" value="ECO:0007005"/>
    <property type="project" value="UniProtKB"/>
</dbReference>
<dbReference type="GO" id="GO:0000049">
    <property type="term" value="F:tRNA binding"/>
    <property type="evidence" value="ECO:0000314"/>
    <property type="project" value="BHF-UCL"/>
</dbReference>
<dbReference type="GO" id="GO:0004831">
    <property type="term" value="F:tyrosine-tRNA ligase activity"/>
    <property type="evidence" value="ECO:0000314"/>
    <property type="project" value="BHF-UCL"/>
</dbReference>
<dbReference type="GO" id="GO:0070184">
    <property type="term" value="P:mitochondrial tyrosyl-tRNA aminoacylation"/>
    <property type="evidence" value="ECO:0000315"/>
    <property type="project" value="BHF-UCL"/>
</dbReference>
<dbReference type="GO" id="GO:0006412">
    <property type="term" value="P:translation"/>
    <property type="evidence" value="ECO:0000303"/>
    <property type="project" value="UniProtKB"/>
</dbReference>
<dbReference type="GO" id="GO:0043039">
    <property type="term" value="P:tRNA aminoacylation"/>
    <property type="evidence" value="ECO:0000314"/>
    <property type="project" value="BHF-UCL"/>
</dbReference>
<dbReference type="CDD" id="cd00805">
    <property type="entry name" value="TyrRS_core"/>
    <property type="match status" value="1"/>
</dbReference>
<dbReference type="FunFam" id="1.10.240.10:FF:000001">
    <property type="entry name" value="Tyrosine--tRNA ligase"/>
    <property type="match status" value="1"/>
</dbReference>
<dbReference type="FunFam" id="3.10.290.10:FF:000017">
    <property type="entry name" value="Tyrosine--tRNA ligase"/>
    <property type="match status" value="1"/>
</dbReference>
<dbReference type="FunFam" id="3.40.50.620:FF:000107">
    <property type="entry name" value="Tyrosine--tRNA ligase"/>
    <property type="match status" value="1"/>
</dbReference>
<dbReference type="Gene3D" id="3.40.50.620">
    <property type="entry name" value="HUPs"/>
    <property type="match status" value="1"/>
</dbReference>
<dbReference type="Gene3D" id="3.10.290.10">
    <property type="entry name" value="RNA-binding S4 domain"/>
    <property type="match status" value="1"/>
</dbReference>
<dbReference type="Gene3D" id="1.10.240.10">
    <property type="entry name" value="Tyrosyl-Transfer RNA Synthetase"/>
    <property type="match status" value="1"/>
</dbReference>
<dbReference type="InterPro" id="IPR001412">
    <property type="entry name" value="aa-tRNA-synth_I_CS"/>
</dbReference>
<dbReference type="InterPro" id="IPR002305">
    <property type="entry name" value="aa-tRNA-synth_Ic"/>
</dbReference>
<dbReference type="InterPro" id="IPR014729">
    <property type="entry name" value="Rossmann-like_a/b/a_fold"/>
</dbReference>
<dbReference type="InterPro" id="IPR036986">
    <property type="entry name" value="S4_RNA-bd_sf"/>
</dbReference>
<dbReference type="InterPro" id="IPR002307">
    <property type="entry name" value="Tyr-tRNA-ligase"/>
</dbReference>
<dbReference type="InterPro" id="IPR024088">
    <property type="entry name" value="Tyr-tRNA-ligase_bac-type"/>
</dbReference>
<dbReference type="NCBIfam" id="TIGR00234">
    <property type="entry name" value="tyrS"/>
    <property type="match status" value="1"/>
</dbReference>
<dbReference type="PANTHER" id="PTHR11766:SF0">
    <property type="entry name" value="TYROSINE--TRNA LIGASE, MITOCHONDRIAL"/>
    <property type="match status" value="1"/>
</dbReference>
<dbReference type="PANTHER" id="PTHR11766">
    <property type="entry name" value="TYROSYL-TRNA SYNTHETASE"/>
    <property type="match status" value="1"/>
</dbReference>
<dbReference type="Pfam" id="PF00579">
    <property type="entry name" value="tRNA-synt_1b"/>
    <property type="match status" value="1"/>
</dbReference>
<dbReference type="PRINTS" id="PR01040">
    <property type="entry name" value="TRNASYNTHTYR"/>
</dbReference>
<dbReference type="SUPFAM" id="SSF55174">
    <property type="entry name" value="Alpha-L RNA-binding motif"/>
    <property type="match status" value="1"/>
</dbReference>
<dbReference type="SUPFAM" id="SSF52374">
    <property type="entry name" value="Nucleotidylyl transferase"/>
    <property type="match status" value="1"/>
</dbReference>
<dbReference type="PROSITE" id="PS00178">
    <property type="entry name" value="AA_TRNA_LIGASE_I"/>
    <property type="match status" value="1"/>
</dbReference>
<gene>
    <name type="primary">YARS2</name>
    <name type="ORF">CGI-04</name>
</gene>
<reference key="1">
    <citation type="journal article" date="2000" name="Genome Res.">
        <title>Identification of novel human genes evolutionarily conserved in Caenorhabditis elegans by comparative proteomics.</title>
        <authorList>
            <person name="Lai C.-H."/>
            <person name="Chou C.-Y."/>
            <person name="Ch'ang L.-Y."/>
            <person name="Liu C.-S."/>
            <person name="Lin W.-C."/>
        </authorList>
    </citation>
    <scope>NUCLEOTIDE SEQUENCE [LARGE SCALE MRNA]</scope>
    <scope>VARIANT VAL-191</scope>
</reference>
<reference key="2">
    <citation type="journal article" date="2004" name="Nat. Genet.">
        <title>Complete sequencing and characterization of 21,243 full-length human cDNAs.</title>
        <authorList>
            <person name="Ota T."/>
            <person name="Suzuki Y."/>
            <person name="Nishikawa T."/>
            <person name="Otsuki T."/>
            <person name="Sugiyama T."/>
            <person name="Irie R."/>
            <person name="Wakamatsu A."/>
            <person name="Hayashi K."/>
            <person name="Sato H."/>
            <person name="Nagai K."/>
            <person name="Kimura K."/>
            <person name="Makita H."/>
            <person name="Sekine M."/>
            <person name="Obayashi M."/>
            <person name="Nishi T."/>
            <person name="Shibahara T."/>
            <person name="Tanaka T."/>
            <person name="Ishii S."/>
            <person name="Yamamoto J."/>
            <person name="Saito K."/>
            <person name="Kawai Y."/>
            <person name="Isono Y."/>
            <person name="Nakamura Y."/>
            <person name="Nagahari K."/>
            <person name="Murakami K."/>
            <person name="Yasuda T."/>
            <person name="Iwayanagi T."/>
            <person name="Wagatsuma M."/>
            <person name="Shiratori A."/>
            <person name="Sudo H."/>
            <person name="Hosoiri T."/>
            <person name="Kaku Y."/>
            <person name="Kodaira H."/>
            <person name="Kondo H."/>
            <person name="Sugawara M."/>
            <person name="Takahashi M."/>
            <person name="Kanda K."/>
            <person name="Yokoi T."/>
            <person name="Furuya T."/>
            <person name="Kikkawa E."/>
            <person name="Omura Y."/>
            <person name="Abe K."/>
            <person name="Kamihara K."/>
            <person name="Katsuta N."/>
            <person name="Sato K."/>
            <person name="Tanikawa M."/>
            <person name="Yamazaki M."/>
            <person name="Ninomiya K."/>
            <person name="Ishibashi T."/>
            <person name="Yamashita H."/>
            <person name="Murakawa K."/>
            <person name="Fujimori K."/>
            <person name="Tanai H."/>
            <person name="Kimata M."/>
            <person name="Watanabe M."/>
            <person name="Hiraoka S."/>
            <person name="Chiba Y."/>
            <person name="Ishida S."/>
            <person name="Ono Y."/>
            <person name="Takiguchi S."/>
            <person name="Watanabe S."/>
            <person name="Yosida M."/>
            <person name="Hotuta T."/>
            <person name="Kusano J."/>
            <person name="Kanehori K."/>
            <person name="Takahashi-Fujii A."/>
            <person name="Hara H."/>
            <person name="Tanase T.-O."/>
            <person name="Nomura Y."/>
            <person name="Togiya S."/>
            <person name="Komai F."/>
            <person name="Hara R."/>
            <person name="Takeuchi K."/>
            <person name="Arita M."/>
            <person name="Imose N."/>
            <person name="Musashino K."/>
            <person name="Yuuki H."/>
            <person name="Oshima A."/>
            <person name="Sasaki N."/>
            <person name="Aotsuka S."/>
            <person name="Yoshikawa Y."/>
            <person name="Matsunawa H."/>
            <person name="Ichihara T."/>
            <person name="Shiohata N."/>
            <person name="Sano S."/>
            <person name="Moriya S."/>
            <person name="Momiyama H."/>
            <person name="Satoh N."/>
            <person name="Takami S."/>
            <person name="Terashima Y."/>
            <person name="Suzuki O."/>
            <person name="Nakagawa S."/>
            <person name="Senoh A."/>
            <person name="Mizoguchi H."/>
            <person name="Goto Y."/>
            <person name="Shimizu F."/>
            <person name="Wakebe H."/>
            <person name="Hishigaki H."/>
            <person name="Watanabe T."/>
            <person name="Sugiyama A."/>
            <person name="Takemoto M."/>
            <person name="Kawakami B."/>
            <person name="Yamazaki M."/>
            <person name="Watanabe K."/>
            <person name="Kumagai A."/>
            <person name="Itakura S."/>
            <person name="Fukuzumi Y."/>
            <person name="Fujimori Y."/>
            <person name="Komiyama M."/>
            <person name="Tashiro H."/>
            <person name="Tanigami A."/>
            <person name="Fujiwara T."/>
            <person name="Ono T."/>
            <person name="Yamada K."/>
            <person name="Fujii Y."/>
            <person name="Ozaki K."/>
            <person name="Hirao M."/>
            <person name="Ohmori Y."/>
            <person name="Kawabata A."/>
            <person name="Hikiji T."/>
            <person name="Kobatake N."/>
            <person name="Inagaki H."/>
            <person name="Ikema Y."/>
            <person name="Okamoto S."/>
            <person name="Okitani R."/>
            <person name="Kawakami T."/>
            <person name="Noguchi S."/>
            <person name="Itoh T."/>
            <person name="Shigeta K."/>
            <person name="Senba T."/>
            <person name="Matsumura K."/>
            <person name="Nakajima Y."/>
            <person name="Mizuno T."/>
            <person name="Morinaga M."/>
            <person name="Sasaki M."/>
            <person name="Togashi T."/>
            <person name="Oyama M."/>
            <person name="Hata H."/>
            <person name="Watanabe M."/>
            <person name="Komatsu T."/>
            <person name="Mizushima-Sugano J."/>
            <person name="Satoh T."/>
            <person name="Shirai Y."/>
            <person name="Takahashi Y."/>
            <person name="Nakagawa K."/>
            <person name="Okumura K."/>
            <person name="Nagase T."/>
            <person name="Nomura N."/>
            <person name="Kikuchi H."/>
            <person name="Masuho Y."/>
            <person name="Yamashita R."/>
            <person name="Nakai K."/>
            <person name="Yada T."/>
            <person name="Nakamura Y."/>
            <person name="Ohara O."/>
            <person name="Isogai T."/>
            <person name="Sugano S."/>
        </authorList>
    </citation>
    <scope>NUCLEOTIDE SEQUENCE [LARGE SCALE MRNA]</scope>
</reference>
<reference key="3">
    <citation type="journal article" date="2006" name="Nature">
        <title>The finished DNA sequence of human chromosome 12.</title>
        <authorList>
            <person name="Scherer S.E."/>
            <person name="Muzny D.M."/>
            <person name="Buhay C.J."/>
            <person name="Chen R."/>
            <person name="Cree A."/>
            <person name="Ding Y."/>
            <person name="Dugan-Rocha S."/>
            <person name="Gill R."/>
            <person name="Gunaratne P."/>
            <person name="Harris R.A."/>
            <person name="Hawes A.C."/>
            <person name="Hernandez J."/>
            <person name="Hodgson A.V."/>
            <person name="Hume J."/>
            <person name="Jackson A."/>
            <person name="Khan Z.M."/>
            <person name="Kovar-Smith C."/>
            <person name="Lewis L.R."/>
            <person name="Lozado R.J."/>
            <person name="Metzker M.L."/>
            <person name="Milosavljevic A."/>
            <person name="Miner G.R."/>
            <person name="Montgomery K.T."/>
            <person name="Morgan M.B."/>
            <person name="Nazareth L.V."/>
            <person name="Scott G."/>
            <person name="Sodergren E."/>
            <person name="Song X.-Z."/>
            <person name="Steffen D."/>
            <person name="Lovering R.C."/>
            <person name="Wheeler D.A."/>
            <person name="Worley K.C."/>
            <person name="Yuan Y."/>
            <person name="Zhang Z."/>
            <person name="Adams C.Q."/>
            <person name="Ansari-Lari M.A."/>
            <person name="Ayele M."/>
            <person name="Brown M.J."/>
            <person name="Chen G."/>
            <person name="Chen Z."/>
            <person name="Clerc-Blankenburg K.P."/>
            <person name="Davis C."/>
            <person name="Delgado O."/>
            <person name="Dinh H.H."/>
            <person name="Draper H."/>
            <person name="Gonzalez-Garay M.L."/>
            <person name="Havlak P."/>
            <person name="Jackson L.R."/>
            <person name="Jacob L.S."/>
            <person name="Kelly S.H."/>
            <person name="Li L."/>
            <person name="Li Z."/>
            <person name="Liu J."/>
            <person name="Liu W."/>
            <person name="Lu J."/>
            <person name="Maheshwari M."/>
            <person name="Nguyen B.-V."/>
            <person name="Okwuonu G.O."/>
            <person name="Pasternak S."/>
            <person name="Perez L.M."/>
            <person name="Plopper F.J.H."/>
            <person name="Santibanez J."/>
            <person name="Shen H."/>
            <person name="Tabor P.E."/>
            <person name="Verduzco D."/>
            <person name="Waldron L."/>
            <person name="Wang Q."/>
            <person name="Williams G.A."/>
            <person name="Zhang J."/>
            <person name="Zhou J."/>
            <person name="Allen C.C."/>
            <person name="Amin A.G."/>
            <person name="Anyalebechi V."/>
            <person name="Bailey M."/>
            <person name="Barbaria J.A."/>
            <person name="Bimage K.E."/>
            <person name="Bryant N.P."/>
            <person name="Burch P.E."/>
            <person name="Burkett C.E."/>
            <person name="Burrell K.L."/>
            <person name="Calderon E."/>
            <person name="Cardenas V."/>
            <person name="Carter K."/>
            <person name="Casias K."/>
            <person name="Cavazos I."/>
            <person name="Cavazos S.R."/>
            <person name="Ceasar H."/>
            <person name="Chacko J."/>
            <person name="Chan S.N."/>
            <person name="Chavez D."/>
            <person name="Christopoulos C."/>
            <person name="Chu J."/>
            <person name="Cockrell R."/>
            <person name="Cox C.D."/>
            <person name="Dang M."/>
            <person name="Dathorne S.R."/>
            <person name="David R."/>
            <person name="Davis C.M."/>
            <person name="Davy-Carroll L."/>
            <person name="Deshazo D.R."/>
            <person name="Donlin J.E."/>
            <person name="D'Souza L."/>
            <person name="Eaves K.A."/>
            <person name="Egan A."/>
            <person name="Emery-Cohen A.J."/>
            <person name="Escotto M."/>
            <person name="Flagg N."/>
            <person name="Forbes L.D."/>
            <person name="Gabisi A.M."/>
            <person name="Garza M."/>
            <person name="Hamilton C."/>
            <person name="Henderson N."/>
            <person name="Hernandez O."/>
            <person name="Hines S."/>
            <person name="Hogues M.E."/>
            <person name="Huang M."/>
            <person name="Idlebird D.G."/>
            <person name="Johnson R."/>
            <person name="Jolivet A."/>
            <person name="Jones S."/>
            <person name="Kagan R."/>
            <person name="King L.M."/>
            <person name="Leal B."/>
            <person name="Lebow H."/>
            <person name="Lee S."/>
            <person name="LeVan J.M."/>
            <person name="Lewis L.C."/>
            <person name="London P."/>
            <person name="Lorensuhewa L.M."/>
            <person name="Loulseged H."/>
            <person name="Lovett D.A."/>
            <person name="Lucier A."/>
            <person name="Lucier R.L."/>
            <person name="Ma J."/>
            <person name="Madu R.C."/>
            <person name="Mapua P."/>
            <person name="Martindale A.D."/>
            <person name="Martinez E."/>
            <person name="Massey E."/>
            <person name="Mawhiney S."/>
            <person name="Meador M.G."/>
            <person name="Mendez S."/>
            <person name="Mercado C."/>
            <person name="Mercado I.C."/>
            <person name="Merritt C.E."/>
            <person name="Miner Z.L."/>
            <person name="Minja E."/>
            <person name="Mitchell T."/>
            <person name="Mohabbat F."/>
            <person name="Mohabbat K."/>
            <person name="Montgomery B."/>
            <person name="Moore N."/>
            <person name="Morris S."/>
            <person name="Munidasa M."/>
            <person name="Ngo R.N."/>
            <person name="Nguyen N.B."/>
            <person name="Nickerson E."/>
            <person name="Nwaokelemeh O.O."/>
            <person name="Nwokenkwo S."/>
            <person name="Obregon M."/>
            <person name="Oguh M."/>
            <person name="Oragunye N."/>
            <person name="Oviedo R.J."/>
            <person name="Parish B.J."/>
            <person name="Parker D.N."/>
            <person name="Parrish J."/>
            <person name="Parks K.L."/>
            <person name="Paul H.A."/>
            <person name="Payton B.A."/>
            <person name="Perez A."/>
            <person name="Perrin W."/>
            <person name="Pickens A."/>
            <person name="Primus E.L."/>
            <person name="Pu L.-L."/>
            <person name="Puazo M."/>
            <person name="Quiles M.M."/>
            <person name="Quiroz J.B."/>
            <person name="Rabata D."/>
            <person name="Reeves K."/>
            <person name="Ruiz S.J."/>
            <person name="Shao H."/>
            <person name="Sisson I."/>
            <person name="Sonaike T."/>
            <person name="Sorelle R.P."/>
            <person name="Sutton A.E."/>
            <person name="Svatek A.F."/>
            <person name="Svetz L.A."/>
            <person name="Tamerisa K.S."/>
            <person name="Taylor T.R."/>
            <person name="Teague B."/>
            <person name="Thomas N."/>
            <person name="Thorn R.D."/>
            <person name="Trejos Z.Y."/>
            <person name="Trevino B.K."/>
            <person name="Ukegbu O.N."/>
            <person name="Urban J.B."/>
            <person name="Vasquez L.I."/>
            <person name="Vera V.A."/>
            <person name="Villasana D.M."/>
            <person name="Wang L."/>
            <person name="Ward-Moore S."/>
            <person name="Warren J.T."/>
            <person name="Wei X."/>
            <person name="White F."/>
            <person name="Williamson A.L."/>
            <person name="Wleczyk R."/>
            <person name="Wooden H.S."/>
            <person name="Wooden S.H."/>
            <person name="Yen J."/>
            <person name="Yoon L."/>
            <person name="Yoon V."/>
            <person name="Zorrilla S.E."/>
            <person name="Nelson D."/>
            <person name="Kucherlapati R."/>
            <person name="Weinstock G."/>
            <person name="Gibbs R.A."/>
        </authorList>
    </citation>
    <scope>NUCLEOTIDE SEQUENCE [LARGE SCALE GENOMIC DNA]</scope>
</reference>
<reference key="4">
    <citation type="submission" date="2005-09" db="EMBL/GenBank/DDBJ databases">
        <authorList>
            <person name="Mural R.J."/>
            <person name="Istrail S."/>
            <person name="Sutton G.G."/>
            <person name="Florea L."/>
            <person name="Halpern A.L."/>
            <person name="Mobarry C.M."/>
            <person name="Lippert R."/>
            <person name="Walenz B."/>
            <person name="Shatkay H."/>
            <person name="Dew I."/>
            <person name="Miller J.R."/>
            <person name="Flanigan M.J."/>
            <person name="Edwards N.J."/>
            <person name="Bolanos R."/>
            <person name="Fasulo D."/>
            <person name="Halldorsson B.V."/>
            <person name="Hannenhalli S."/>
            <person name="Turner R."/>
            <person name="Yooseph S."/>
            <person name="Lu F."/>
            <person name="Nusskern D.R."/>
            <person name="Shue B.C."/>
            <person name="Zheng X.H."/>
            <person name="Zhong F."/>
            <person name="Delcher A.L."/>
            <person name="Huson D.H."/>
            <person name="Kravitz S.A."/>
            <person name="Mouchard L."/>
            <person name="Reinert K."/>
            <person name="Remington K.A."/>
            <person name="Clark A.G."/>
            <person name="Waterman M.S."/>
            <person name="Eichler E.E."/>
            <person name="Adams M.D."/>
            <person name="Hunkapiller M.W."/>
            <person name="Myers E.W."/>
            <person name="Venter J.C."/>
        </authorList>
    </citation>
    <scope>NUCLEOTIDE SEQUENCE [LARGE SCALE GENOMIC DNA]</scope>
</reference>
<reference key="5">
    <citation type="journal article" date="2004" name="Genome Res.">
        <title>The status, quality, and expansion of the NIH full-length cDNA project: the Mammalian Gene Collection (MGC).</title>
        <authorList>
            <consortium name="The MGC Project Team"/>
        </authorList>
    </citation>
    <scope>NUCLEOTIDE SEQUENCE [LARGE SCALE MRNA]</scope>
    <source>
        <tissue>Eye</tissue>
    </source>
</reference>
<reference key="6">
    <citation type="journal article" date="2005" name="Biochemistry">
        <title>Toward the full set of human mitochondrial aminoacyl-tRNA synthetases: characterization of AspRS and TyrRS.</title>
        <authorList>
            <person name="Bonnefond L."/>
            <person name="Fender A."/>
            <person name="Rudinger-Thirion J."/>
            <person name="Giege R."/>
            <person name="Florentz C."/>
            <person name="Sissler M."/>
        </authorList>
    </citation>
    <scope>FUNCTION</scope>
    <scope>CATALYTIC ACTIVITY</scope>
    <scope>SUBCELLULAR LOCATION</scope>
    <scope>SUBUNIT</scope>
</reference>
<reference key="7">
    <citation type="journal article" date="2009" name="Science">
        <title>Lysine acetylation targets protein complexes and co-regulates major cellular functions.</title>
        <authorList>
            <person name="Choudhary C."/>
            <person name="Kumar C."/>
            <person name="Gnad F."/>
            <person name="Nielsen M.L."/>
            <person name="Rehman M."/>
            <person name="Walther T.C."/>
            <person name="Olsen J.V."/>
            <person name="Mann M."/>
        </authorList>
    </citation>
    <scope>ACETYLATION [LARGE SCALE ANALYSIS] AT LYS-355</scope>
    <scope>IDENTIFICATION BY MASS SPECTROMETRY [LARGE SCALE ANALYSIS]</scope>
</reference>
<reference key="8">
    <citation type="journal article" date="2011" name="BMC Syst. Biol.">
        <title>Initial characterization of the human central proteome.</title>
        <authorList>
            <person name="Burkard T.R."/>
            <person name="Planyavsky M."/>
            <person name="Kaupe I."/>
            <person name="Breitwieser F.P."/>
            <person name="Buerckstuemmer T."/>
            <person name="Bennett K.L."/>
            <person name="Superti-Furga G."/>
            <person name="Colinge J."/>
        </authorList>
    </citation>
    <scope>IDENTIFICATION BY MASS SPECTROMETRY [LARGE SCALE ANALYSIS]</scope>
</reference>
<reference key="9">
    <citation type="journal article" date="2015" name="Proteomics">
        <title>N-terminome analysis of the human mitochondrial proteome.</title>
        <authorList>
            <person name="Vaca Jacome A.S."/>
            <person name="Rabilloud T."/>
            <person name="Schaeffer-Reiss C."/>
            <person name="Rompais M."/>
            <person name="Ayoub D."/>
            <person name="Lane L."/>
            <person name="Bairoch A."/>
            <person name="Van Dorsselaer A."/>
            <person name="Carapito C."/>
        </authorList>
    </citation>
    <scope>IDENTIFICATION BY MASS SPECTROMETRY [LARGE SCALE ANALYSIS]</scope>
</reference>
<reference key="10">
    <citation type="journal article" date="2018" name="J. Biol. Chem.">
        <title>Three human aminoacyl-tRNA synthetases have distinct sub-mitochondrial localizations that are unaffected by disease-associated mutations.</title>
        <authorList>
            <person name="Gonzalez-Serrano L.E."/>
            <person name="Karim L."/>
            <person name="Pierre F."/>
            <person name="Schwenzer H."/>
            <person name="Roetig A."/>
            <person name="Munnich A."/>
            <person name="Sissler M."/>
        </authorList>
    </citation>
    <scope>SUBCELLULAR LOCATION</scope>
</reference>
<reference evidence="12" key="11">
    <citation type="journal article" date="2007" name="Structure">
        <title>Crystal structure of human mitochondrial tyrosyl-tRNA synthetase reveals common and idiosyncratic features.</title>
        <authorList>
            <person name="Bonnefond L."/>
            <person name="Frugier M."/>
            <person name="Touze E."/>
            <person name="Lorber B."/>
            <person name="Florentz C."/>
            <person name="Giege R."/>
            <person name="Sauter C."/>
            <person name="Rudinger-Thirion J."/>
        </authorList>
    </citation>
    <scope>X-RAY CRYSTALLOGRAPHY (2.20 ANGSTROMS) OF 32-375 IN COMPLEX WITH SUBSTRATE ANALOG TYROSYLADENYLATE</scope>
    <scope>CATALYTIC ACTIVITY</scope>
    <scope>FUNCTION</scope>
    <scope>SUBUNIT</scope>
    <scope>MUTAGENESIS OF SER-200 AND GLN-202</scope>
</reference>
<reference key="12">
    <citation type="journal article" date="2010" name="Am. J. Hum. Genet.">
        <title>Mutation of the mitochondrial tyrosyl-tRNA synthetase gene, YARS2, causes myopathy, lactic acidosis, and sideroblastic anemia--MLASA syndrome.</title>
        <authorList>
            <person name="Riley L.G."/>
            <person name="Cooper S."/>
            <person name="Hickey P."/>
            <person name="Rudinger-Thirion J."/>
            <person name="McKenzie M."/>
            <person name="Compton A."/>
            <person name="Lim S.C."/>
            <person name="Thorburn D."/>
            <person name="Ryan M.T."/>
            <person name="Giege R."/>
            <person name="Bahlo M."/>
            <person name="Christodoulou J."/>
        </authorList>
    </citation>
    <scope>VARIANT MLASA2 LEU-52</scope>
    <scope>CHARACTERIZATION OF VARIANT MLASA2 LEU-52</scope>
</reference>
<reference key="13">
    <citation type="journal article" date="2012" name="Hum. Mutat.">
        <title>A novel mutation in YARS2 causes myopathy with lactic acidosis and sideroblastic anemia.</title>
        <authorList>
            <person name="Sasarman F."/>
            <person name="Nishimura T."/>
            <person name="Thiffault I."/>
            <person name="Shoubridge E.A."/>
        </authorList>
    </citation>
    <scope>VARIANT MLASA2 ASP-46</scope>
</reference>